<comment type="function">
    <text evidence="2">Catalyzes the cleavage of the C5-C6 bond of 2-hydroxy-6-oxononadienedioate and 2-hydroxy-6-oxononatrienedioate, a dienol ring fission product of the bacterial meta-cleavage pathway for degradation of phenylpropionic acid.</text>
</comment>
<comment type="catalytic activity">
    <reaction evidence="2">
        <text>(2Z,4E)-2-hydroxy-6-oxonona-2,4-dienedioate + H2O = (2Z)-2-hydroxypenta-2,4-dienoate + succinate + H(+)</text>
        <dbReference type="Rhea" id="RHEA:34187"/>
        <dbReference type="ChEBI" id="CHEBI:15377"/>
        <dbReference type="ChEBI" id="CHEBI:15378"/>
        <dbReference type="ChEBI" id="CHEBI:30031"/>
        <dbReference type="ChEBI" id="CHEBI:66887"/>
        <dbReference type="ChEBI" id="CHEBI:67152"/>
        <dbReference type="EC" id="3.7.1.14"/>
    </reaction>
</comment>
<comment type="catalytic activity">
    <reaction evidence="2">
        <text>(2Z,4E,7E)-2-hydroxy-6-oxonona-2,4,7-trienedioate + H2O = (2Z)-2-hydroxypenta-2,4-dienoate + fumarate + H(+)</text>
        <dbReference type="Rhea" id="RHEA:34191"/>
        <dbReference type="ChEBI" id="CHEBI:15377"/>
        <dbReference type="ChEBI" id="CHEBI:15378"/>
        <dbReference type="ChEBI" id="CHEBI:29806"/>
        <dbReference type="ChEBI" id="CHEBI:66888"/>
        <dbReference type="ChEBI" id="CHEBI:67152"/>
        <dbReference type="EC" id="3.7.1.14"/>
    </reaction>
</comment>
<comment type="pathway">
    <text evidence="2">Aromatic compound metabolism; 3-phenylpropanoate degradation.</text>
</comment>
<comment type="subunit">
    <text evidence="2">Homodimer.</text>
</comment>
<comment type="similarity">
    <text evidence="2">Belongs to the AB hydrolase superfamily. MhpC family.</text>
</comment>
<comment type="sequence caution" evidence="3">
    <conflict type="erroneous initiation">
        <sequence resource="EMBL-CDS" id="CAR11607"/>
    </conflict>
    <text>Extended N-terminus.</text>
</comment>
<proteinExistence type="inferred from homology"/>
<gene>
    <name evidence="2" type="primary">mhpC</name>
    <name type="ordered locus">ECUMN_0392</name>
</gene>
<evidence type="ECO:0000255" key="1"/>
<evidence type="ECO:0000255" key="2">
    <source>
        <dbReference type="HAMAP-Rule" id="MF_01654"/>
    </source>
</evidence>
<evidence type="ECO:0000305" key="3"/>
<keyword id="KW-0058">Aromatic hydrocarbons catabolism</keyword>
<keyword id="KW-0378">Hydrolase</keyword>
<dbReference type="EC" id="3.7.1.14" evidence="2"/>
<dbReference type="EMBL" id="CU928163">
    <property type="protein sequence ID" value="CAR11607.1"/>
    <property type="status" value="ALT_INIT"/>
    <property type="molecule type" value="Genomic_DNA"/>
</dbReference>
<dbReference type="RefSeq" id="WP_000121898.1">
    <property type="nucleotide sequence ID" value="NC_011751.1"/>
</dbReference>
<dbReference type="SMR" id="B7N8Q6"/>
<dbReference type="STRING" id="585056.ECUMN_0392"/>
<dbReference type="ESTHER" id="ecoli-mhpc">
    <property type="family name" value="Carbon-carbon_bond_hydrolase"/>
</dbReference>
<dbReference type="MEROPS" id="S33.995"/>
<dbReference type="GeneID" id="93777106"/>
<dbReference type="KEGG" id="eum:ECUMN_0392"/>
<dbReference type="PATRIC" id="fig|585056.7.peg.590"/>
<dbReference type="HOGENOM" id="CLU_020336_13_2_6"/>
<dbReference type="UniPathway" id="UPA00714"/>
<dbReference type="Proteomes" id="UP000007097">
    <property type="component" value="Chromosome"/>
</dbReference>
<dbReference type="GO" id="GO:0005737">
    <property type="term" value="C:cytoplasm"/>
    <property type="evidence" value="ECO:0007669"/>
    <property type="project" value="InterPro"/>
</dbReference>
<dbReference type="GO" id="GO:0052823">
    <property type="term" value="F:2-hydroxy-6-oxonona-2,4,7-trienedioate hydrolase activity"/>
    <property type="evidence" value="ECO:0007669"/>
    <property type="project" value="RHEA"/>
</dbReference>
<dbReference type="GO" id="GO:0018771">
    <property type="term" value="F:2-hydroxy-6-oxonona-2,4-dienedioate hydrolase activity"/>
    <property type="evidence" value="ECO:0007669"/>
    <property type="project" value="UniProtKB-UniRule"/>
</dbReference>
<dbReference type="GO" id="GO:0042803">
    <property type="term" value="F:protein homodimerization activity"/>
    <property type="evidence" value="ECO:0007669"/>
    <property type="project" value="InterPro"/>
</dbReference>
<dbReference type="GO" id="GO:0019380">
    <property type="term" value="P:3-phenylpropionate catabolic process"/>
    <property type="evidence" value="ECO:0007669"/>
    <property type="project" value="UniProtKB-UniRule"/>
</dbReference>
<dbReference type="FunFam" id="3.40.50.1820:FF:000085">
    <property type="entry name" value="2-hydroxy-6-oxononadienedioate/2-hydroxy-6-oxononatrienedioate hydrolase"/>
    <property type="match status" value="1"/>
</dbReference>
<dbReference type="Gene3D" id="3.40.50.1820">
    <property type="entry name" value="alpha/beta hydrolase"/>
    <property type="match status" value="1"/>
</dbReference>
<dbReference type="HAMAP" id="MF_01654">
    <property type="entry name" value="MhpC"/>
    <property type="match status" value="1"/>
</dbReference>
<dbReference type="InterPro" id="IPR000073">
    <property type="entry name" value="AB_hydrolase_1"/>
</dbReference>
<dbReference type="InterPro" id="IPR029058">
    <property type="entry name" value="AB_hydrolase_fold"/>
</dbReference>
<dbReference type="InterPro" id="IPR000639">
    <property type="entry name" value="Epox_hydrolase-like"/>
</dbReference>
<dbReference type="InterPro" id="IPR023791">
    <property type="entry name" value="MhpC_alpha/beta_hydrolase"/>
</dbReference>
<dbReference type="PANTHER" id="PTHR43689:SF8">
    <property type="entry name" value="ALPHA_BETA-HYDROLASES SUPERFAMILY PROTEIN"/>
    <property type="match status" value="1"/>
</dbReference>
<dbReference type="PANTHER" id="PTHR43689">
    <property type="entry name" value="HYDROLASE"/>
    <property type="match status" value="1"/>
</dbReference>
<dbReference type="Pfam" id="PF00561">
    <property type="entry name" value="Abhydrolase_1"/>
    <property type="match status" value="1"/>
</dbReference>
<dbReference type="PRINTS" id="PR00111">
    <property type="entry name" value="ABHYDROLASE"/>
</dbReference>
<dbReference type="PRINTS" id="PR00412">
    <property type="entry name" value="EPOXHYDRLASE"/>
</dbReference>
<dbReference type="SUPFAM" id="SSF53474">
    <property type="entry name" value="alpha/beta-Hydrolases"/>
    <property type="match status" value="1"/>
</dbReference>
<feature type="chain" id="PRO_1000187017" description="2-hydroxy-6-oxononadienedioate/2-hydroxy-6-oxononatrienedioate hydrolase">
    <location>
        <begin position="1"/>
        <end position="288"/>
    </location>
</feature>
<feature type="domain" description="AB hydrolase-1" evidence="1">
    <location>
        <begin position="38"/>
        <end position="273"/>
    </location>
</feature>
<feature type="active site" description="Proton acceptor" evidence="2">
    <location>
        <position position="267"/>
    </location>
</feature>
<feature type="site" description="Transition state stabilizer" evidence="2">
    <location>
        <position position="114"/>
    </location>
</feature>
<feature type="site" description="Catalytic role in ketonization of the dienol substrate (substrate destabilization)" evidence="2">
    <location>
        <position position="192"/>
    </location>
</feature>
<accession>B7N8Q6</accession>
<name>MHPC_ECOLU</name>
<protein>
    <recommendedName>
        <fullName evidence="2">2-hydroxy-6-oxononadienedioate/2-hydroxy-6-oxononatrienedioate hydrolase</fullName>
        <ecNumber evidence="2">3.7.1.14</ecNumber>
    </recommendedName>
    <alternativeName>
        <fullName evidence="2">2-hydroxy-6-ketonona-2,4-diene-1,9-dioic acid 5,6-hydrolase</fullName>
    </alternativeName>
    <alternativeName>
        <fullName evidence="2">2-hydroxy-6-oxonona-2,4,7-triene-1,9-dioic acid 5,6-hydrolase</fullName>
    </alternativeName>
    <alternativeName>
        <fullName evidence="2">2-hydroxy-6-oxonona-2,4-diene-1,9-dioic acid 5,6-hydrolase</fullName>
    </alternativeName>
</protein>
<reference key="1">
    <citation type="journal article" date="2009" name="PLoS Genet.">
        <title>Organised genome dynamics in the Escherichia coli species results in highly diverse adaptive paths.</title>
        <authorList>
            <person name="Touchon M."/>
            <person name="Hoede C."/>
            <person name="Tenaillon O."/>
            <person name="Barbe V."/>
            <person name="Baeriswyl S."/>
            <person name="Bidet P."/>
            <person name="Bingen E."/>
            <person name="Bonacorsi S."/>
            <person name="Bouchier C."/>
            <person name="Bouvet O."/>
            <person name="Calteau A."/>
            <person name="Chiapello H."/>
            <person name="Clermont O."/>
            <person name="Cruveiller S."/>
            <person name="Danchin A."/>
            <person name="Diard M."/>
            <person name="Dossat C."/>
            <person name="Karoui M.E."/>
            <person name="Frapy E."/>
            <person name="Garry L."/>
            <person name="Ghigo J.M."/>
            <person name="Gilles A.M."/>
            <person name="Johnson J."/>
            <person name="Le Bouguenec C."/>
            <person name="Lescat M."/>
            <person name="Mangenot S."/>
            <person name="Martinez-Jehanne V."/>
            <person name="Matic I."/>
            <person name="Nassif X."/>
            <person name="Oztas S."/>
            <person name="Petit M.A."/>
            <person name="Pichon C."/>
            <person name="Rouy Z."/>
            <person name="Ruf C.S."/>
            <person name="Schneider D."/>
            <person name="Tourret J."/>
            <person name="Vacherie B."/>
            <person name="Vallenet D."/>
            <person name="Medigue C."/>
            <person name="Rocha E.P.C."/>
            <person name="Denamur E."/>
        </authorList>
    </citation>
    <scope>NUCLEOTIDE SEQUENCE [LARGE SCALE GENOMIC DNA]</scope>
    <source>
        <strain>UMN026 / ExPEC</strain>
    </source>
</reference>
<sequence length="288" mass="31937">MSYQPQTEAATSRFLNVEEAGKTLRIHFNDCGQGDETVVLLHGSGPGATGWANFSRNIDPLVEAGYRVILLDCPGWGKSDSIVNSGSRSDLNARILKSVVDQLDIAKIHLLGNSMGGHSSVAFTLNWPERVGKLVLMGGGTGGMSLFTPMPTEGIKRLNQLYRQPTIENLKLMMDIFVFDTSDLTDALFEARLNNMLSRRDHLENFVKSLEANPKQFPDFGPRLAEIKAQTLIVWGRNDRFVPMDAGLRLLSGIAGSELHIFRDCGHWAQWEHADAFNQLVLNFLARP</sequence>
<organism>
    <name type="scientific">Escherichia coli O17:K52:H18 (strain UMN026 / ExPEC)</name>
    <dbReference type="NCBI Taxonomy" id="585056"/>
    <lineage>
        <taxon>Bacteria</taxon>
        <taxon>Pseudomonadati</taxon>
        <taxon>Pseudomonadota</taxon>
        <taxon>Gammaproteobacteria</taxon>
        <taxon>Enterobacterales</taxon>
        <taxon>Enterobacteriaceae</taxon>
        <taxon>Escherichia</taxon>
    </lineage>
</organism>